<dbReference type="EC" id="7.1.1.2"/>
<dbReference type="EMBL" id="X15917">
    <property type="protein sequence ID" value="CAA34045.1"/>
    <property type="molecule type" value="Genomic_DNA"/>
</dbReference>
<dbReference type="EMBL" id="M26930">
    <property type="protein sequence ID" value="AAA79257.1"/>
    <property type="molecule type" value="Genomic_DNA"/>
</dbReference>
<dbReference type="PIR" id="S07736">
    <property type="entry name" value="F2PPG"/>
</dbReference>
<dbReference type="SMR" id="P15602"/>
<dbReference type="GO" id="GO:0005739">
    <property type="term" value="C:mitochondrion"/>
    <property type="evidence" value="ECO:0007669"/>
    <property type="project" value="UniProtKB-SubCell"/>
</dbReference>
<dbReference type="GO" id="GO:0051539">
    <property type="term" value="F:4 iron, 4 sulfur cluster binding"/>
    <property type="evidence" value="ECO:0007669"/>
    <property type="project" value="UniProtKB-KW"/>
</dbReference>
<dbReference type="GO" id="GO:0046872">
    <property type="term" value="F:metal ion binding"/>
    <property type="evidence" value="ECO:0007669"/>
    <property type="project" value="UniProtKB-KW"/>
</dbReference>
<dbReference type="GO" id="GO:0008137">
    <property type="term" value="F:NADH dehydrogenase (ubiquinone) activity"/>
    <property type="evidence" value="ECO:0007669"/>
    <property type="project" value="UniProtKB-EC"/>
</dbReference>
<dbReference type="GO" id="GO:0048038">
    <property type="term" value="F:quinone binding"/>
    <property type="evidence" value="ECO:0007669"/>
    <property type="project" value="InterPro"/>
</dbReference>
<dbReference type="FunFam" id="3.40.50.12280:FF:000002">
    <property type="entry name" value="NADH-quinone oxidoreductase subunit B"/>
    <property type="match status" value="1"/>
</dbReference>
<dbReference type="Gene3D" id="3.40.50.12280">
    <property type="match status" value="1"/>
</dbReference>
<dbReference type="HAMAP" id="MF_01356">
    <property type="entry name" value="NDH1_NuoB"/>
    <property type="match status" value="1"/>
</dbReference>
<dbReference type="InterPro" id="IPR006137">
    <property type="entry name" value="NADH_UbQ_OxRdtase-like_20kDa"/>
</dbReference>
<dbReference type="InterPro" id="IPR006138">
    <property type="entry name" value="NADH_UQ_OxRdtase_20Kd_su"/>
</dbReference>
<dbReference type="NCBIfam" id="TIGR01957">
    <property type="entry name" value="nuoB_fam"/>
    <property type="match status" value="1"/>
</dbReference>
<dbReference type="NCBIfam" id="NF005012">
    <property type="entry name" value="PRK06411.1"/>
    <property type="match status" value="1"/>
</dbReference>
<dbReference type="PANTHER" id="PTHR11995">
    <property type="entry name" value="NADH DEHYDROGENASE"/>
    <property type="match status" value="1"/>
</dbReference>
<dbReference type="PANTHER" id="PTHR11995:SF14">
    <property type="entry name" value="NADH DEHYDROGENASE [UBIQUINONE] IRON-SULFUR PROTEIN 7, MITOCHONDRIAL"/>
    <property type="match status" value="1"/>
</dbReference>
<dbReference type="Pfam" id="PF01058">
    <property type="entry name" value="Oxidored_q6"/>
    <property type="match status" value="1"/>
</dbReference>
<dbReference type="SUPFAM" id="SSF56770">
    <property type="entry name" value="HydA/Nqo6-like"/>
    <property type="match status" value="1"/>
</dbReference>
<dbReference type="PROSITE" id="PS01150">
    <property type="entry name" value="COMPLEX1_20K"/>
    <property type="match status" value="1"/>
</dbReference>
<protein>
    <recommendedName>
        <fullName>NADH-ubiquinone oxidoreductase 20 kDa subunit</fullName>
        <ecNumber>7.1.1.2</ecNumber>
    </recommendedName>
</protein>
<accession>P15602</accession>
<accession>Q35365</accession>
<gene>
    <name type="primary">NAD10</name>
    <name type="synonym">PSBG</name>
</gene>
<reference key="1">
    <citation type="journal article" date="1990" name="Nucleic Acids Res.">
        <title>Nucleotide sequence of the mitochondrial genome of Paramecium.</title>
        <authorList>
            <person name="Pritchard A.E."/>
            <person name="Seilhamer J.J."/>
            <person name="Mahalingam R."/>
            <person name="Sable C.L."/>
            <person name="Venuti S.E."/>
            <person name="Cummings D.J."/>
        </authorList>
    </citation>
    <scope>NUCLEOTIDE SEQUENCE [GENOMIC DNA]</scope>
    <source>
        <strain>Stock 51</strain>
    </source>
</reference>
<reference key="2">
    <citation type="journal article" date="1989" name="Gene">
        <title>An unusual region of Paramecium mitochondrial DNA containing chloroplast-like genes.</title>
        <authorList>
            <person name="Pritchard A.E."/>
            <person name="Venuti S.E."/>
            <person name="Ghalambor M.A."/>
            <person name="Sable C.L."/>
            <person name="Cummings D.J."/>
        </authorList>
    </citation>
    <scope>NUCLEOTIDE SEQUENCE [GENOMIC DNA]</scope>
    <source>
        <strain>Stock 51</strain>
    </source>
</reference>
<name>NDUS7_PARTE</name>
<comment type="catalytic activity">
    <reaction>
        <text>a ubiquinone + NADH + 5 H(+)(in) = a ubiquinol + NAD(+) + 4 H(+)(out)</text>
        <dbReference type="Rhea" id="RHEA:29091"/>
        <dbReference type="Rhea" id="RHEA-COMP:9565"/>
        <dbReference type="Rhea" id="RHEA-COMP:9566"/>
        <dbReference type="ChEBI" id="CHEBI:15378"/>
        <dbReference type="ChEBI" id="CHEBI:16389"/>
        <dbReference type="ChEBI" id="CHEBI:17976"/>
        <dbReference type="ChEBI" id="CHEBI:57540"/>
        <dbReference type="ChEBI" id="CHEBI:57945"/>
        <dbReference type="EC" id="7.1.1.2"/>
    </reaction>
</comment>
<comment type="cofactor">
    <cofactor evidence="2">
        <name>[4Fe-4S] cluster</name>
        <dbReference type="ChEBI" id="CHEBI:49883"/>
    </cofactor>
    <text evidence="2">Binds 1 [4Fe-4S] cluster.</text>
</comment>
<comment type="subcellular location">
    <subcellularLocation>
        <location>Mitochondrion</location>
    </subcellularLocation>
</comment>
<comment type="similarity">
    <text evidence="2">Belongs to the complex I 20 kDa subunit family.</text>
</comment>
<organism>
    <name type="scientific">Paramecium tetraurelia</name>
    <dbReference type="NCBI Taxonomy" id="5888"/>
    <lineage>
        <taxon>Eukaryota</taxon>
        <taxon>Sar</taxon>
        <taxon>Alveolata</taxon>
        <taxon>Ciliophora</taxon>
        <taxon>Intramacronucleata</taxon>
        <taxon>Oligohymenophorea</taxon>
        <taxon>Peniculida</taxon>
        <taxon>Parameciidae</taxon>
        <taxon>Paramecium</taxon>
    </lineage>
</organism>
<sequence>MILKADFLKLSANNLISWARQGSFWPLTFGLACCALEMMHATVSRYDFDRFGVIFRATPRQADLIIVAGTVTNKMAPALRRLYDQTADPKWVLSMGSCANGGGYYHYSYAVVKGCDKIIPVDMLCPRCPPTAEALFFGVLQLQKTLMKTINEKKVF</sequence>
<proteinExistence type="inferred from homology"/>
<feature type="chain" id="PRO_0000118739" description="NADH-ubiquinone oxidoreductase 20 kDa subunit">
    <location>
        <begin position="1"/>
        <end position="156"/>
    </location>
</feature>
<feature type="binding site" evidence="1">
    <location>
        <position position="33"/>
    </location>
    <ligand>
        <name>[4Fe-4S] cluster</name>
        <dbReference type="ChEBI" id="CHEBI:49883"/>
    </ligand>
</feature>
<feature type="binding site" evidence="1">
    <location>
        <position position="34"/>
    </location>
    <ligand>
        <name>[4Fe-4S] cluster</name>
        <dbReference type="ChEBI" id="CHEBI:49883"/>
    </ligand>
</feature>
<feature type="binding site" evidence="1">
    <location>
        <position position="98"/>
    </location>
    <ligand>
        <name>[4Fe-4S] cluster</name>
        <dbReference type="ChEBI" id="CHEBI:49883"/>
    </ligand>
</feature>
<feature type="binding site" evidence="1">
    <location>
        <position position="128"/>
    </location>
    <ligand>
        <name>[4Fe-4S] cluster</name>
        <dbReference type="ChEBI" id="CHEBI:49883"/>
    </ligand>
</feature>
<feature type="sequence conflict" description="In Ref. 2; AAA79257." evidence="2" ref="2">
    <original>MLCPR</original>
    <variation>IFVPG</variation>
    <location>
        <begin position="123"/>
        <end position="127"/>
    </location>
</feature>
<keyword id="KW-0004">4Fe-4S</keyword>
<keyword id="KW-0249">Electron transport</keyword>
<keyword id="KW-0408">Iron</keyword>
<keyword id="KW-0411">Iron-sulfur</keyword>
<keyword id="KW-0479">Metal-binding</keyword>
<keyword id="KW-0496">Mitochondrion</keyword>
<keyword id="KW-0520">NAD</keyword>
<keyword id="KW-0560">Oxidoreductase</keyword>
<keyword id="KW-0679">Respiratory chain</keyword>
<keyword id="KW-1278">Translocase</keyword>
<keyword id="KW-0813">Transport</keyword>
<geneLocation type="mitochondrion"/>
<evidence type="ECO:0000255" key="1"/>
<evidence type="ECO:0000305" key="2"/>